<sequence length="283" mass="31267">MQTDSLSPSPNPVSPVPLNNPTSAPRYGTVIPNRIFVGGIDFKTNESDLRKFFSQYGSVKEVKIVNDRAGVSKGYGFVTFETQEDAQKILQEAEKLNYKDKKLNIGPAIRKQQVGIPRSSIMPAAGTMYLTTSTGYPYTYHNGVAYFHTPEVTSVPPPWPSRSVCSSPVMVAQPIYQQPAYHYQATAQYLPGQWQWSVPQPPASSAPFLYLQPSEVIYQPVEIAQDGGCVPPPLSLMETSVPEPYSDHGVQATYHQVYAPSAISMPAPVMQPEPIKTVWSIHY</sequence>
<dbReference type="EMBL" id="AB074454">
    <property type="protein sequence ID" value="BAB72085.1"/>
    <property type="status" value="ALT_SEQ"/>
    <property type="molecule type" value="mRNA"/>
</dbReference>
<dbReference type="SMR" id="Q8WP23"/>
<dbReference type="STRING" id="9541.ENSMFAP00000015787"/>
<dbReference type="eggNOG" id="KOG0118">
    <property type="taxonomic scope" value="Eukaryota"/>
</dbReference>
<dbReference type="OrthoDB" id="762982at2759"/>
<dbReference type="Proteomes" id="UP000233100">
    <property type="component" value="Unplaced"/>
</dbReference>
<dbReference type="GO" id="GO:0005737">
    <property type="term" value="C:cytoplasm"/>
    <property type="evidence" value="ECO:0000250"/>
    <property type="project" value="UniProtKB"/>
</dbReference>
<dbReference type="GO" id="GO:0003730">
    <property type="term" value="F:mRNA 3'-UTR binding"/>
    <property type="evidence" value="ECO:0007669"/>
    <property type="project" value="TreeGrafter"/>
</dbReference>
<dbReference type="GO" id="GO:0008494">
    <property type="term" value="F:translation activator activity"/>
    <property type="evidence" value="ECO:0007669"/>
    <property type="project" value="TreeGrafter"/>
</dbReference>
<dbReference type="GO" id="GO:0070935">
    <property type="term" value="P:3'-UTR-mediated mRNA stabilization"/>
    <property type="evidence" value="ECO:0007669"/>
    <property type="project" value="TreeGrafter"/>
</dbReference>
<dbReference type="GO" id="GO:0030154">
    <property type="term" value="P:cell differentiation"/>
    <property type="evidence" value="ECO:0007669"/>
    <property type="project" value="UniProtKB-KW"/>
</dbReference>
<dbReference type="GO" id="GO:0045948">
    <property type="term" value="P:positive regulation of translational initiation"/>
    <property type="evidence" value="ECO:0007669"/>
    <property type="project" value="TreeGrafter"/>
</dbReference>
<dbReference type="GO" id="GO:0007283">
    <property type="term" value="P:spermatogenesis"/>
    <property type="evidence" value="ECO:0007669"/>
    <property type="project" value="UniProtKB-KW"/>
</dbReference>
<dbReference type="CDD" id="cd12673">
    <property type="entry name" value="RRM_BOULE"/>
    <property type="match status" value="1"/>
</dbReference>
<dbReference type="FunFam" id="3.30.70.330:FF:000167">
    <property type="entry name" value="protein boule-like isoform X1"/>
    <property type="match status" value="1"/>
</dbReference>
<dbReference type="Gene3D" id="3.30.70.330">
    <property type="match status" value="1"/>
</dbReference>
<dbReference type="InterPro" id="IPR043628">
    <property type="entry name" value="DAZ_dom"/>
</dbReference>
<dbReference type="InterPro" id="IPR012677">
    <property type="entry name" value="Nucleotide-bd_a/b_plait_sf"/>
</dbReference>
<dbReference type="InterPro" id="IPR035979">
    <property type="entry name" value="RBD_domain_sf"/>
</dbReference>
<dbReference type="InterPro" id="IPR000504">
    <property type="entry name" value="RRM_dom"/>
</dbReference>
<dbReference type="PANTHER" id="PTHR11176">
    <property type="entry name" value="BOULE-RELATED"/>
    <property type="match status" value="1"/>
</dbReference>
<dbReference type="PANTHER" id="PTHR11176:SF10">
    <property type="entry name" value="PROTEIN BOULE-LIKE"/>
    <property type="match status" value="1"/>
</dbReference>
<dbReference type="Pfam" id="PF00076">
    <property type="entry name" value="RRM_1"/>
    <property type="match status" value="1"/>
</dbReference>
<dbReference type="SMART" id="SM00360">
    <property type="entry name" value="RRM"/>
    <property type="match status" value="1"/>
</dbReference>
<dbReference type="SUPFAM" id="SSF54928">
    <property type="entry name" value="RNA-binding domain, RBD"/>
    <property type="match status" value="1"/>
</dbReference>
<dbReference type="PROSITE" id="PS51890">
    <property type="entry name" value="DAZ"/>
    <property type="match status" value="1"/>
</dbReference>
<dbReference type="PROSITE" id="PS50102">
    <property type="entry name" value="RRM"/>
    <property type="match status" value="1"/>
</dbReference>
<protein>
    <recommendedName>
        <fullName>Protein boule-like</fullName>
    </recommendedName>
</protein>
<gene>
    <name type="primary">BOLL</name>
    <name type="ORF">QtsA-21032</name>
</gene>
<organism>
    <name type="scientific">Macaca fascicularis</name>
    <name type="common">Crab-eating macaque</name>
    <name type="synonym">Cynomolgus monkey</name>
    <dbReference type="NCBI Taxonomy" id="9541"/>
    <lineage>
        <taxon>Eukaryota</taxon>
        <taxon>Metazoa</taxon>
        <taxon>Chordata</taxon>
        <taxon>Craniata</taxon>
        <taxon>Vertebrata</taxon>
        <taxon>Euteleostomi</taxon>
        <taxon>Mammalia</taxon>
        <taxon>Eutheria</taxon>
        <taxon>Euarchontoglires</taxon>
        <taxon>Primates</taxon>
        <taxon>Haplorrhini</taxon>
        <taxon>Catarrhini</taxon>
        <taxon>Cercopithecidae</taxon>
        <taxon>Cercopithecinae</taxon>
        <taxon>Macaca</taxon>
    </lineage>
</organism>
<keyword id="KW-0963">Cytoplasm</keyword>
<keyword id="KW-0217">Developmental protein</keyword>
<keyword id="KW-0221">Differentiation</keyword>
<keyword id="KW-1185">Reference proteome</keyword>
<keyword id="KW-0694">RNA-binding</keyword>
<keyword id="KW-0744">Spermatogenesis</keyword>
<keyword id="KW-0810">Translation regulation</keyword>
<accession>Q8WP23</accession>
<feature type="chain" id="PRO_0000081495" description="Protein boule-like">
    <location>
        <begin position="1"/>
        <end position="283"/>
    </location>
</feature>
<feature type="domain" description="RRM" evidence="3">
    <location>
        <begin position="33"/>
        <end position="110"/>
    </location>
</feature>
<feature type="domain" description="DAZ" evidence="4">
    <location>
        <begin position="160"/>
        <end position="184"/>
    </location>
</feature>
<feature type="region of interest" description="Disordered" evidence="5">
    <location>
        <begin position="1"/>
        <end position="25"/>
    </location>
</feature>
<comment type="function">
    <text evidence="1">Probable RNA-binding protein, which may be required during spermatogenesis. May act by binding to the 3'-UTR of mRNAs and regulating their translation (By similarity).</text>
</comment>
<comment type="subunit">
    <text evidence="1">Interacts with DAZ1 and DAZL.</text>
</comment>
<comment type="subcellular location">
    <subcellularLocation>
        <location evidence="2">Cytoplasm</location>
    </subcellularLocation>
</comment>
<comment type="similarity">
    <text evidence="4">Belongs to the RRM DAZ family.</text>
</comment>
<comment type="sequence caution" evidence="6">
    <conflict type="erroneous termination">
        <sequence resource="EMBL-CDS" id="BAB72085"/>
    </conflict>
    <text>Truncated C-terminus.</text>
</comment>
<reference key="1">
    <citation type="journal article" date="2002" name="BMC Genomics">
        <title>Cynomolgus monkey testicular cDNAs for discovery of novel human genes in the human genome sequence.</title>
        <authorList>
            <person name="Osada N."/>
            <person name="Hida M."/>
            <person name="Kusuda J."/>
            <person name="Tanuma R."/>
            <person name="Hirata M."/>
            <person name="Suto Y."/>
            <person name="Hirai M."/>
            <person name="Terao K."/>
            <person name="Sugano S."/>
            <person name="Hashimoto K."/>
        </authorList>
    </citation>
    <scope>NUCLEOTIDE SEQUENCE [LARGE SCALE MRNA]</scope>
    <source>
        <tissue>Testis</tissue>
    </source>
</reference>
<evidence type="ECO:0000250" key="1"/>
<evidence type="ECO:0000250" key="2">
    <source>
        <dbReference type="UniProtKB" id="Q8N9W6"/>
    </source>
</evidence>
<evidence type="ECO:0000255" key="3">
    <source>
        <dbReference type="PROSITE-ProRule" id="PRU00176"/>
    </source>
</evidence>
<evidence type="ECO:0000255" key="4">
    <source>
        <dbReference type="PROSITE-ProRule" id="PRU01238"/>
    </source>
</evidence>
<evidence type="ECO:0000256" key="5">
    <source>
        <dbReference type="SAM" id="MobiDB-lite"/>
    </source>
</evidence>
<evidence type="ECO:0000305" key="6"/>
<name>BOLL_MACFA</name>
<proteinExistence type="evidence at transcript level"/>